<protein>
    <recommendedName>
        <fullName>Putative extracellular sulfatase Sulf-1 homolog</fullName>
        <shortName>CeSulf-1</shortName>
        <ecNumber>3.1.6.-</ecNumber>
    </recommendedName>
</protein>
<accession>Q21376</accession>
<name>SULF1_CAEEL</name>
<gene>
    <name type="primary">sul-1</name>
    <name type="ORF">K09C4.8</name>
</gene>
<dbReference type="EC" id="3.1.6.-"/>
<dbReference type="EMBL" id="FO081118">
    <property type="protein sequence ID" value="CCD69246.1"/>
    <property type="molecule type" value="Genomic_DNA"/>
</dbReference>
<dbReference type="PIR" id="T16584">
    <property type="entry name" value="T16584"/>
</dbReference>
<dbReference type="RefSeq" id="NP_508560.1">
    <property type="nucleotide sequence ID" value="NM_076159.4"/>
</dbReference>
<dbReference type="SMR" id="Q21376"/>
<dbReference type="FunCoup" id="Q21376">
    <property type="interactions" value="1197"/>
</dbReference>
<dbReference type="STRING" id="6239.K09C4.8.1"/>
<dbReference type="GlyCosmos" id="Q21376">
    <property type="glycosylation" value="10 sites, No reported glycans"/>
</dbReference>
<dbReference type="PaxDb" id="6239-K09C4.8"/>
<dbReference type="EnsemblMetazoa" id="K09C4.8.1">
    <property type="protein sequence ID" value="K09C4.8.1"/>
    <property type="gene ID" value="WBGene00006308"/>
</dbReference>
<dbReference type="GeneID" id="180619"/>
<dbReference type="KEGG" id="cel:CELE_K09C4.8"/>
<dbReference type="UCSC" id="K09C4.8">
    <property type="organism name" value="c. elegans"/>
</dbReference>
<dbReference type="AGR" id="WB:WBGene00006308"/>
<dbReference type="CTD" id="180619"/>
<dbReference type="WormBase" id="K09C4.8">
    <property type="protein sequence ID" value="CE04736"/>
    <property type="gene ID" value="WBGene00006308"/>
    <property type="gene designation" value="sul-1"/>
</dbReference>
<dbReference type="eggNOG" id="KOG3731">
    <property type="taxonomic scope" value="Eukaryota"/>
</dbReference>
<dbReference type="GeneTree" id="ENSGT00940000169254"/>
<dbReference type="HOGENOM" id="CLU_006332_2_0_1"/>
<dbReference type="InParanoid" id="Q21376"/>
<dbReference type="OMA" id="ECKRRKW"/>
<dbReference type="OrthoDB" id="96314at2759"/>
<dbReference type="PhylomeDB" id="Q21376"/>
<dbReference type="PRO" id="PR:Q21376"/>
<dbReference type="Proteomes" id="UP000001940">
    <property type="component" value="Chromosome X"/>
</dbReference>
<dbReference type="Bgee" id="WBGene00006308">
    <property type="expression patterns" value="Expressed in embryo and 2 other cell types or tissues"/>
</dbReference>
<dbReference type="GO" id="GO:0009986">
    <property type="term" value="C:cell surface"/>
    <property type="evidence" value="ECO:0007669"/>
    <property type="project" value="UniProtKB-SubCell"/>
</dbReference>
<dbReference type="GO" id="GO:0005783">
    <property type="term" value="C:endoplasmic reticulum"/>
    <property type="evidence" value="ECO:0007669"/>
    <property type="project" value="UniProtKB-SubCell"/>
</dbReference>
<dbReference type="GO" id="GO:0005795">
    <property type="term" value="C:Golgi stack"/>
    <property type="evidence" value="ECO:0007669"/>
    <property type="project" value="UniProtKB-SubCell"/>
</dbReference>
<dbReference type="GO" id="GO:0005539">
    <property type="term" value="F:glycosaminoglycan binding"/>
    <property type="evidence" value="ECO:0000318"/>
    <property type="project" value="GO_Central"/>
</dbReference>
<dbReference type="GO" id="GO:0017095">
    <property type="term" value="F:heparan sulfate 6-sulfotransferase activity"/>
    <property type="evidence" value="ECO:0000315"/>
    <property type="project" value="WormBase"/>
</dbReference>
<dbReference type="GO" id="GO:0046872">
    <property type="term" value="F:metal ion binding"/>
    <property type="evidence" value="ECO:0007669"/>
    <property type="project" value="UniProtKB-KW"/>
</dbReference>
<dbReference type="GO" id="GO:0008449">
    <property type="term" value="F:N-acetylglucosamine-6-sulfatase activity"/>
    <property type="evidence" value="ECO:0000318"/>
    <property type="project" value="GO_Central"/>
</dbReference>
<dbReference type="GO" id="GO:0015012">
    <property type="term" value="P:heparan sulfate proteoglycan biosynthetic process"/>
    <property type="evidence" value="ECO:0000315"/>
    <property type="project" value="WormBase"/>
</dbReference>
<dbReference type="CDD" id="cd16147">
    <property type="entry name" value="G6S"/>
    <property type="match status" value="1"/>
</dbReference>
<dbReference type="FunFam" id="3.40.720.10:FF:000086">
    <property type="entry name" value="CRE-SUL-1 protein"/>
    <property type="match status" value="1"/>
</dbReference>
<dbReference type="Gene3D" id="3.40.720.10">
    <property type="entry name" value="Alkaline Phosphatase, subunit A"/>
    <property type="match status" value="1"/>
</dbReference>
<dbReference type="InterPro" id="IPR017850">
    <property type="entry name" value="Alkaline_phosphatase_core_sf"/>
</dbReference>
<dbReference type="InterPro" id="IPR024607">
    <property type="entry name" value="Sulfatase_CS"/>
</dbReference>
<dbReference type="InterPro" id="IPR000917">
    <property type="entry name" value="Sulfatase_N"/>
</dbReference>
<dbReference type="PANTHER" id="PTHR43108:SF16">
    <property type="entry name" value="EXTRACELLULAR SULFATASE SULF-1 HOMOLOG"/>
    <property type="match status" value="1"/>
</dbReference>
<dbReference type="PANTHER" id="PTHR43108">
    <property type="entry name" value="N-ACETYLGLUCOSAMINE-6-SULFATASE FAMILY MEMBER"/>
    <property type="match status" value="1"/>
</dbReference>
<dbReference type="Pfam" id="PF00884">
    <property type="entry name" value="Sulfatase"/>
    <property type="match status" value="1"/>
</dbReference>
<dbReference type="SUPFAM" id="SSF53649">
    <property type="entry name" value="Alkaline phosphatase-like"/>
    <property type="match status" value="1"/>
</dbReference>
<dbReference type="PROSITE" id="PS00523">
    <property type="entry name" value="SULFATASE_1"/>
    <property type="match status" value="1"/>
</dbReference>
<reference key="1">
    <citation type="journal article" date="1998" name="Science">
        <title>Genome sequence of the nematode C. elegans: a platform for investigating biology.</title>
        <authorList>
            <consortium name="The C. elegans sequencing consortium"/>
        </authorList>
    </citation>
    <scope>NUCLEOTIDE SEQUENCE [LARGE SCALE GENOMIC DNA]</scope>
    <source>
        <strain>Bristol N2</strain>
    </source>
</reference>
<sequence length="709" mass="83784">MISNLRISNYFIIFYVLFLIIPIKVTSIHFVDSQHNVILILTDDQDIELGSMDFMPKTSQIMKERGTEFTSGYVTTPICCPSRSTILTGLYVHNHHVHTNNQNCTGVEWRKVHEKKSIGVYLQEAGYRTAYLGKYLNEYDGSYIPPGWDEWHAIVKNSKFYNYTMNSNGEREKFGSEYEKDYFTDLVTNRSLKFIDKHIKIRAWQPFALIISYPAPHGPEDPAPQFAHMFENEISHRTGSWNFAPNPDKQWLLQRTGKMNDVHISFTDLLHRRRLQTLQSVDEGIERLFNLLRELNQLWNTYAIYTSDHGYHLGQFGLLKGKNMPYEFDIRVPFFMRGPGIPRNVTFNEIVTNVDIAPTMLHIAGVPKPARMNGRSLLELVALKKKKKKHMTALKPWRDTILIERGKMPKLKKIRDRYIKQKKKFNKENRLSKECKRRKWQRDCVHGQLWKCYYTVEDRWRIYKCRDNWSDQCSCRKKREISNYDDDDIDEFLTYADRENFSEGHEWYQGEFEDSGEVGEELDGHRSKRGILSKCSCSRNVSHPIKLLEQKMSKKHYLKYKKKPQNGSLKPKDCSLPQMNCFTHTASHWKTPPLWPEELGEFCFCQNCNNNTYWCLRTKNETHNFLYCEFVTEFISFYDFNTDPDQLINAVYSLDIGVLEQLSEQLRNLRKCKNRQCEIWSTSQMLRSPKLVDLRVNEKSFLTYQPEKT</sequence>
<keyword id="KW-0106">Calcium</keyword>
<keyword id="KW-0256">Endoplasmic reticulum</keyword>
<keyword id="KW-0325">Glycoprotein</keyword>
<keyword id="KW-0333">Golgi apparatus</keyword>
<keyword id="KW-0378">Hydrolase</keyword>
<keyword id="KW-0479">Metal-binding</keyword>
<keyword id="KW-1185">Reference proteome</keyword>
<keyword id="KW-0732">Signal</keyword>
<proteinExistence type="inferred from homology"/>
<evidence type="ECO:0000250" key="1"/>
<evidence type="ECO:0000250" key="2">
    <source>
        <dbReference type="UniProtKB" id="P15289"/>
    </source>
</evidence>
<evidence type="ECO:0000255" key="3"/>
<evidence type="ECO:0000305" key="4"/>
<feature type="signal peptide" evidence="3">
    <location>
        <begin position="1"/>
        <end position="27"/>
    </location>
</feature>
<feature type="chain" id="PRO_0000033438" description="Putative extracellular sulfatase Sulf-1 homolog">
    <location>
        <begin position="28"/>
        <end position="709"/>
    </location>
</feature>
<feature type="active site" description="Nucleophile" evidence="2">
    <location>
        <position position="79"/>
    </location>
</feature>
<feature type="binding site" evidence="1">
    <location>
        <position position="43"/>
    </location>
    <ligand>
        <name>Ca(2+)</name>
        <dbReference type="ChEBI" id="CHEBI:29108"/>
    </ligand>
</feature>
<feature type="binding site" evidence="1">
    <location>
        <position position="44"/>
    </location>
    <ligand>
        <name>Ca(2+)</name>
        <dbReference type="ChEBI" id="CHEBI:29108"/>
    </ligand>
</feature>
<feature type="binding site" description="via 3-oxoalanine" evidence="1">
    <location>
        <position position="79"/>
    </location>
    <ligand>
        <name>Ca(2+)</name>
        <dbReference type="ChEBI" id="CHEBI:29108"/>
    </ligand>
</feature>
<feature type="binding site" evidence="1">
    <location>
        <position position="308"/>
    </location>
    <ligand>
        <name>Ca(2+)</name>
        <dbReference type="ChEBI" id="CHEBI:29108"/>
    </ligand>
</feature>
<feature type="binding site" evidence="1">
    <location>
        <position position="309"/>
    </location>
    <ligand>
        <name>Ca(2+)</name>
        <dbReference type="ChEBI" id="CHEBI:29108"/>
    </ligand>
</feature>
<feature type="modified residue" description="3-oxoalanine (Cys)" evidence="2">
    <location>
        <position position="79"/>
    </location>
</feature>
<feature type="glycosylation site" description="N-linked (GlcNAc...) asparagine" evidence="3">
    <location>
        <position position="103"/>
    </location>
</feature>
<feature type="glycosylation site" description="N-linked (GlcNAc...) asparagine" evidence="3">
    <location>
        <position position="162"/>
    </location>
</feature>
<feature type="glycosylation site" description="N-linked (GlcNAc...) asparagine" evidence="3">
    <location>
        <position position="189"/>
    </location>
</feature>
<feature type="glycosylation site" description="N-linked (GlcNAc...) asparagine" evidence="3">
    <location>
        <position position="344"/>
    </location>
</feature>
<feature type="glycosylation site" description="N-linked (GlcNAc...) asparagine" evidence="3">
    <location>
        <position position="468"/>
    </location>
</feature>
<feature type="glycosylation site" description="N-linked (GlcNAc...) asparagine" evidence="3">
    <location>
        <position position="500"/>
    </location>
</feature>
<feature type="glycosylation site" description="N-linked (GlcNAc...) asparagine" evidence="3">
    <location>
        <position position="540"/>
    </location>
</feature>
<feature type="glycosylation site" description="N-linked (GlcNAc...) asparagine" evidence="3">
    <location>
        <position position="566"/>
    </location>
</feature>
<feature type="glycosylation site" description="N-linked (GlcNAc...) asparagine" evidence="3">
    <location>
        <position position="610"/>
    </location>
</feature>
<feature type="glycosylation site" description="N-linked (GlcNAc...) asparagine" evidence="3">
    <location>
        <position position="620"/>
    </location>
</feature>
<comment type="cofactor">
    <cofactor evidence="1">
        <name>Ca(2+)</name>
        <dbReference type="ChEBI" id="CHEBI:29108"/>
    </cofactor>
    <text evidence="1">Binds 1 Ca(2+) ion per subunit.</text>
</comment>
<comment type="subcellular location">
    <subcellularLocation>
        <location evidence="1">Endoplasmic reticulum</location>
    </subcellularLocation>
    <subcellularLocation>
        <location evidence="1">Golgi apparatus</location>
        <location evidence="1">Golgi stack</location>
    </subcellularLocation>
    <subcellularLocation>
        <location evidence="1">Cell surface</location>
    </subcellularLocation>
    <text evidence="1">Also localized on the cell surface.</text>
</comment>
<comment type="PTM">
    <text evidence="1">The conversion to 3-oxoalanine (also known as C-formylglycine, FGly), of a serine or cysteine residue in prokaryotes and of a cysteine residue in eukaryotes, is critical for catalytic activity.</text>
</comment>
<comment type="similarity">
    <text evidence="4">Belongs to the sulfatase family.</text>
</comment>
<organism>
    <name type="scientific">Caenorhabditis elegans</name>
    <dbReference type="NCBI Taxonomy" id="6239"/>
    <lineage>
        <taxon>Eukaryota</taxon>
        <taxon>Metazoa</taxon>
        <taxon>Ecdysozoa</taxon>
        <taxon>Nematoda</taxon>
        <taxon>Chromadorea</taxon>
        <taxon>Rhabditida</taxon>
        <taxon>Rhabditina</taxon>
        <taxon>Rhabditomorpha</taxon>
        <taxon>Rhabditoidea</taxon>
        <taxon>Rhabditidae</taxon>
        <taxon>Peloderinae</taxon>
        <taxon>Caenorhabditis</taxon>
    </lineage>
</organism>